<proteinExistence type="evidence at transcript level"/>
<accession>Q6GL57</accession>
<protein>
    <recommendedName>
        <fullName evidence="7">Interleukin enhancer-binding factor 3</fullName>
    </recommendedName>
</protein>
<evidence type="ECO:0000250" key="1">
    <source>
        <dbReference type="UniProtKB" id="Q12906"/>
    </source>
</evidence>
<evidence type="ECO:0000250" key="2">
    <source>
        <dbReference type="UniProtKB" id="Q91550"/>
    </source>
</evidence>
<evidence type="ECO:0000255" key="3"/>
<evidence type="ECO:0000255" key="4">
    <source>
        <dbReference type="PROSITE-ProRule" id="PRU00266"/>
    </source>
</evidence>
<evidence type="ECO:0000255" key="5">
    <source>
        <dbReference type="PROSITE-ProRule" id="PRU01040"/>
    </source>
</evidence>
<evidence type="ECO:0000256" key="6">
    <source>
        <dbReference type="SAM" id="MobiDB-lite"/>
    </source>
</evidence>
<evidence type="ECO:0000312" key="7">
    <source>
        <dbReference type="EMBL" id="AAH74653.1"/>
    </source>
</evidence>
<name>ILF3_XENTR</name>
<sequence>MRPMRIFLNDDRHVMAKHSVVYPTQEELEAVQNMVSHTERALKAVSDWIDQQEKDCSGEQEQPEPEEPETTEEGKDSEGKTGENPTRTLRGVMRVGLVAKGLLLKGDLDLELVLLCRDKPTISLLKRVADNLVLQFETVSEDKYEVIQNIREASIVIKNTKEPPLTLNIRLTSPLVREEMEKLSAGETLTVSDPPDVLDRHKCLAALASLRHAKWFQARANGLKSCVIVIRVLRDLCTRVPTWEPLRGWPLELLCEKAIGTANRPMGAGEALRRVLECLSSGILMPDGPGLYDPCEKEASDALEHLERQQREDITQSAQHALRLAAFGQLHKVLGMDPLPTKIPKKTKVETPTIDYTVQIPPSTTYAMPALKRPMEEDGEDKSPSKKKKKIQKKDEKSEPPQAMNALMRLNQLKPGLQYKLISQTGPVHAPIFTMSVEVDEKTFEASGPSKKTAKLHVAVKVLQDMGLPTGMEEKEEATDESEQKPVVQTPAQPADSTQTDSAADQAESAKQQGPILTKHGKNPVMELNEKRRGLKYELISETGGSHDKRFVMEVEVDGVKFQGSGSNKKVAKAYAALAALEKLFPDYTTYAEAPKKKRPPMMPRGGPKFAGKHNQGFGMMYNEVPPPQAMRGRGRGGMNRGRGRGRGGFGGGNHGGYMNSGGYGGGYGGNYNYQTSATAGYSDFFTDCYGYHDFASA</sequence>
<comment type="function">
    <text evidence="1 2">RNA-binding protein that plays an essential role in the biogenesis of circular RNAs (circRNAs) which are produced by back-splicing circularization of pre-mRNAs. Within the nucleus, promotes circRNAs processing by stabilizing the regulatory elements residing in the flanking introns of the circularized exons. Plays thereby a role in the back-splicing of a subset of circRNAs. As a consequence, participates in a wide range of transcriptional and post-transcriptional processes. Binds to poly-U elements and AU-rich elements (AREs) in the 3'-UTR of target mRNAs (By similarity). Upon viral infection, ILF3 accumulates in the cytoplasm and participates in the innate antiviral response. Mechanistically, ILF3 becomes phosphorylated and activated by the double-stranded RNA-activated protein kinase/PKR which releases ILF3 from cellular mature circRNAs. In turn, unbound ILF3 molecules are able to interact with and thus inhibit viral mRNAs. Has a cytoplasmic role early in development as part of a ribonucleoprotein (mRNP) complex which may regulate mRNA transport and/or translation. Following nuclear localization at the mid-blastula transition, acts as a transcription factor and binds the 5'-CCAAT-3' promoter sequence to regulate transcription of the gata2 gene as a subunit of the CCAAT box transcription factor (CBTF). Its role as an mRNP component negatively regulates its activity as a transcription factor by precluding its nuclear localization.</text>
</comment>
<comment type="subunit">
    <text evidence="2">A component of a ybx2/frgy2-containing mRNA-ribonucleoprotein (mRNP) complex. Also a component of the CCAAT box transcription factor (CBTF) complex.</text>
</comment>
<comment type="subcellular location">
    <subcellularLocation>
        <location evidence="2">Nucleus</location>
    </subcellularLocation>
    <subcellularLocation>
        <location evidence="2">Cytoplasm</location>
    </subcellularLocation>
    <text evidence="2">Cytoplasmic in fertilized eggs, then translocates to the nucleus prior to gastrulation. RNA-binding is required for cytoplasmic retention during early development, and nuclear translocation at the mid-blastula transition (MBT) is probably coupled to the degradation of maternal mRNA that occurs at that stage (By similarity).</text>
</comment>
<comment type="PTM">
    <text evidence="2">Phosphorylated. Phosphorylation affects nuclear translocation.</text>
</comment>
<comment type="PTM">
    <text evidence="2">Methylated by protein arginine N-methyltransferase 1 (prmt1b) in the RGG-rich domain. Methylation decreases DNA-binding and thereby decreases transcription of the gata2 gene, but does not regulate dsRNA binding or subcellular localization.</text>
</comment>
<organism>
    <name type="scientific">Xenopus tropicalis</name>
    <name type="common">Western clawed frog</name>
    <name type="synonym">Silurana tropicalis</name>
    <dbReference type="NCBI Taxonomy" id="8364"/>
    <lineage>
        <taxon>Eukaryota</taxon>
        <taxon>Metazoa</taxon>
        <taxon>Chordata</taxon>
        <taxon>Craniata</taxon>
        <taxon>Vertebrata</taxon>
        <taxon>Euteleostomi</taxon>
        <taxon>Amphibia</taxon>
        <taxon>Batrachia</taxon>
        <taxon>Anura</taxon>
        <taxon>Pipoidea</taxon>
        <taxon>Pipidae</taxon>
        <taxon>Xenopodinae</taxon>
        <taxon>Xenopus</taxon>
        <taxon>Silurana</taxon>
    </lineage>
</organism>
<dbReference type="EMBL" id="BC074653">
    <property type="protein sequence ID" value="AAH74653.1"/>
    <property type="molecule type" value="mRNA"/>
</dbReference>
<dbReference type="RefSeq" id="NP_001005648.1">
    <property type="nucleotide sequence ID" value="NM_001005648.1"/>
</dbReference>
<dbReference type="SMR" id="Q6GL57"/>
<dbReference type="FunCoup" id="Q6GL57">
    <property type="interactions" value="3318"/>
</dbReference>
<dbReference type="STRING" id="8364.ENSXETP00000026522"/>
<dbReference type="GeneID" id="448121"/>
<dbReference type="KEGG" id="xtr:448121"/>
<dbReference type="AGR" id="Xenbase:XB-GENE-494367"/>
<dbReference type="CTD" id="3609"/>
<dbReference type="Xenbase" id="XB-GENE-494367">
    <property type="gene designation" value="ilf3"/>
</dbReference>
<dbReference type="InParanoid" id="Q6GL57"/>
<dbReference type="OrthoDB" id="8898434at2759"/>
<dbReference type="Reactome" id="R-XTR-9762293">
    <property type="pathway name" value="Regulation of CDH11 gene transcription"/>
</dbReference>
<dbReference type="Reactome" id="R-XTR-9833482">
    <property type="pathway name" value="PKR-mediated signaling"/>
</dbReference>
<dbReference type="Proteomes" id="UP000008143">
    <property type="component" value="Chromosome 3"/>
</dbReference>
<dbReference type="Bgee" id="ENSXETG00000011651">
    <property type="expression patterns" value="Expressed in gastrula and 25 other cell types or tissues"/>
</dbReference>
<dbReference type="ExpressionAtlas" id="Q6GL57">
    <property type="expression patterns" value="baseline"/>
</dbReference>
<dbReference type="GO" id="GO:0005737">
    <property type="term" value="C:cytoplasm"/>
    <property type="evidence" value="ECO:0000250"/>
    <property type="project" value="UniProtKB"/>
</dbReference>
<dbReference type="GO" id="GO:0005634">
    <property type="term" value="C:nucleus"/>
    <property type="evidence" value="ECO:0000250"/>
    <property type="project" value="UniProtKB"/>
</dbReference>
<dbReference type="GO" id="GO:1990904">
    <property type="term" value="C:ribonucleoprotein complex"/>
    <property type="evidence" value="ECO:0000250"/>
    <property type="project" value="UniProtKB"/>
</dbReference>
<dbReference type="GO" id="GO:0003725">
    <property type="term" value="F:double-stranded RNA binding"/>
    <property type="evidence" value="ECO:0000250"/>
    <property type="project" value="UniProtKB"/>
</dbReference>
<dbReference type="GO" id="GO:0035925">
    <property type="term" value="F:mRNA 3'-UTR AU-rich region binding"/>
    <property type="evidence" value="ECO:0000250"/>
    <property type="project" value="UniProtKB"/>
</dbReference>
<dbReference type="GO" id="GO:0048027">
    <property type="term" value="F:mRNA 5'-UTR binding"/>
    <property type="evidence" value="ECO:0000250"/>
    <property type="project" value="UniProtKB"/>
</dbReference>
<dbReference type="GO" id="GO:0043565">
    <property type="term" value="F:sequence-specific DNA binding"/>
    <property type="evidence" value="ECO:0000250"/>
    <property type="project" value="UniProtKB"/>
</dbReference>
<dbReference type="GO" id="GO:0000976">
    <property type="term" value="F:transcription cis-regulatory region binding"/>
    <property type="evidence" value="ECO:0000250"/>
    <property type="project" value="UniProtKB"/>
</dbReference>
<dbReference type="GO" id="GO:0051607">
    <property type="term" value="P:defense response to virus"/>
    <property type="evidence" value="ECO:0007669"/>
    <property type="project" value="UniProtKB-KW"/>
</dbReference>
<dbReference type="GO" id="GO:0006357">
    <property type="term" value="P:regulation of transcription by RNA polymerase II"/>
    <property type="evidence" value="ECO:0000250"/>
    <property type="project" value="UniProtKB"/>
</dbReference>
<dbReference type="GO" id="GO:0160091">
    <property type="term" value="P:spliceosome-depend formation of circular RNA"/>
    <property type="evidence" value="ECO:0000250"/>
    <property type="project" value="UniProtKB"/>
</dbReference>
<dbReference type="CDD" id="cd19910">
    <property type="entry name" value="DSRM_ILF3_rpt1"/>
    <property type="match status" value="1"/>
</dbReference>
<dbReference type="CDD" id="cd19912">
    <property type="entry name" value="DSRM_ILF3_rpt2"/>
    <property type="match status" value="1"/>
</dbReference>
<dbReference type="FunFam" id="1.10.1410.40:FF:000001">
    <property type="entry name" value="interleukin enhancer-binding factor 3 isoform X1"/>
    <property type="match status" value="1"/>
</dbReference>
<dbReference type="FunFam" id="3.30.160.20:FF:000006">
    <property type="entry name" value="interleukin enhancer-binding factor 3 isoform X2"/>
    <property type="match status" value="1"/>
</dbReference>
<dbReference type="FunFam" id="3.30.160.20:FF:000008">
    <property type="entry name" value="interleukin enhancer-binding factor 3 isoform X2"/>
    <property type="match status" value="1"/>
</dbReference>
<dbReference type="Gene3D" id="1.10.1410.40">
    <property type="match status" value="1"/>
</dbReference>
<dbReference type="Gene3D" id="3.30.160.20">
    <property type="match status" value="2"/>
</dbReference>
<dbReference type="Gene3D" id="3.30.460.10">
    <property type="entry name" value="Beta Polymerase, domain 2"/>
    <property type="match status" value="2"/>
</dbReference>
<dbReference type="InterPro" id="IPR014720">
    <property type="entry name" value="dsRBD_dom"/>
</dbReference>
<dbReference type="InterPro" id="IPR033099">
    <property type="entry name" value="DSRM1_ILF3"/>
</dbReference>
<dbReference type="InterPro" id="IPR006561">
    <property type="entry name" value="DZF_dom"/>
</dbReference>
<dbReference type="InterPro" id="IPR049402">
    <property type="entry name" value="DZF_dom_C"/>
</dbReference>
<dbReference type="InterPro" id="IPR049401">
    <property type="entry name" value="DZF_dom_N"/>
</dbReference>
<dbReference type="InterPro" id="IPR043519">
    <property type="entry name" value="NT_sf"/>
</dbReference>
<dbReference type="PANTHER" id="PTHR45762:SF4">
    <property type="entry name" value="INTERLEUKIN ENHANCER-BINDING FACTOR 3"/>
    <property type="match status" value="1"/>
</dbReference>
<dbReference type="PANTHER" id="PTHR45762">
    <property type="entry name" value="ZINC FINGER RNA-BINDING PROTEIN"/>
    <property type="match status" value="1"/>
</dbReference>
<dbReference type="Pfam" id="PF00035">
    <property type="entry name" value="dsrm"/>
    <property type="match status" value="2"/>
</dbReference>
<dbReference type="Pfam" id="PF20965">
    <property type="entry name" value="DZF_C"/>
    <property type="match status" value="1"/>
</dbReference>
<dbReference type="Pfam" id="PF07528">
    <property type="entry name" value="DZF_N"/>
    <property type="match status" value="1"/>
</dbReference>
<dbReference type="SMART" id="SM00358">
    <property type="entry name" value="DSRM"/>
    <property type="match status" value="2"/>
</dbReference>
<dbReference type="SMART" id="SM00572">
    <property type="entry name" value="DZF"/>
    <property type="match status" value="1"/>
</dbReference>
<dbReference type="SUPFAM" id="SSF54768">
    <property type="entry name" value="dsRNA-binding domain-like"/>
    <property type="match status" value="2"/>
</dbReference>
<dbReference type="PROSITE" id="PS50137">
    <property type="entry name" value="DS_RBD"/>
    <property type="match status" value="2"/>
</dbReference>
<dbReference type="PROSITE" id="PS51703">
    <property type="entry name" value="DZF"/>
    <property type="match status" value="1"/>
</dbReference>
<feature type="chain" id="PRO_0000391691" description="Interleukin enhancer-binding factor 3">
    <location>
        <begin position="1"/>
        <end position="698"/>
    </location>
</feature>
<feature type="domain" description="DZF" evidence="5">
    <location>
        <begin position="5"/>
        <end position="379"/>
    </location>
</feature>
<feature type="domain" description="DRBM 1" evidence="4">
    <location>
        <begin position="399"/>
        <end position="468"/>
    </location>
</feature>
<feature type="domain" description="DRBM 2" evidence="4">
    <location>
        <begin position="520"/>
        <end position="586"/>
    </location>
</feature>
<feature type="region of interest" description="Disordered" evidence="6">
    <location>
        <begin position="51"/>
        <end position="88"/>
    </location>
</feature>
<feature type="region of interest" description="Disordered" evidence="6">
    <location>
        <begin position="374"/>
        <end position="403"/>
    </location>
</feature>
<feature type="region of interest" description="Disordered" evidence="6">
    <location>
        <begin position="473"/>
        <end position="522"/>
    </location>
</feature>
<feature type="short sequence motif" description="Bipartite nuclear localization signal" evidence="3">
    <location>
        <begin position="372"/>
        <end position="390"/>
    </location>
</feature>
<feature type="compositionally biased region" description="Acidic residues" evidence="6">
    <location>
        <begin position="61"/>
        <end position="71"/>
    </location>
</feature>
<feature type="compositionally biased region" description="Basic and acidic residues" evidence="6">
    <location>
        <begin position="72"/>
        <end position="81"/>
    </location>
</feature>
<feature type="compositionally biased region" description="Basic and acidic residues" evidence="6">
    <location>
        <begin position="374"/>
        <end position="384"/>
    </location>
</feature>
<feature type="compositionally biased region" description="Polar residues" evidence="6">
    <location>
        <begin position="490"/>
        <end position="503"/>
    </location>
</feature>
<keyword id="KW-0051">Antiviral defense</keyword>
<keyword id="KW-0963">Cytoplasm</keyword>
<keyword id="KW-0217">Developmental protein</keyword>
<keyword id="KW-0238">DNA-binding</keyword>
<keyword id="KW-0488">Methylation</keyword>
<keyword id="KW-0539">Nucleus</keyword>
<keyword id="KW-0597">Phosphoprotein</keyword>
<keyword id="KW-1185">Reference proteome</keyword>
<keyword id="KW-0677">Repeat</keyword>
<keyword id="KW-0694">RNA-binding</keyword>
<keyword id="KW-0804">Transcription</keyword>
<keyword id="KW-0805">Transcription regulation</keyword>
<gene>
    <name evidence="7" type="primary">ilf3</name>
</gene>
<reference evidence="7" key="1">
    <citation type="submission" date="2004-06" db="EMBL/GenBank/DDBJ databases">
        <authorList>
            <consortium name="NIH - Xenopus Gene Collection (XGC) project"/>
        </authorList>
    </citation>
    <scope>NUCLEOTIDE SEQUENCE [LARGE SCALE MRNA]</scope>
    <source>
        <tissue evidence="7">Tail bud</tissue>
    </source>
</reference>